<sequence>MCFSQAETLVNYSFGTCQHRKIFPHFFPSDLLGNKFLPIRGVPHRGPGCYIAEESKDLAYSLAKIPTSIKGYGFGARTAVRFKPKNKDVTPYPGMYQTVNLQEQTHKPNFAPFNTLSPRFRTYSKDPCYPGPGTYKLEKKEPQKVTWPMKFGSPDWSQVPCLQKRTLKTELSTDKDFRKHRNRLAYLSLYYN</sequence>
<dbReference type="EMBL" id="BC109727">
    <property type="protein sequence ID" value="AAI09728.1"/>
    <property type="molecule type" value="mRNA"/>
</dbReference>
<dbReference type="FunCoup" id="Q2TBS4">
    <property type="interactions" value="54"/>
</dbReference>
<dbReference type="STRING" id="9913.ENSBTAP00000010125"/>
<dbReference type="PaxDb" id="9913-ENSBTAP00000010125"/>
<dbReference type="KEGG" id="bta:617486"/>
<dbReference type="eggNOG" id="ENOG502RZWF">
    <property type="taxonomic scope" value="Eukaryota"/>
</dbReference>
<dbReference type="InParanoid" id="Q2TBS4"/>
<dbReference type="OrthoDB" id="8189408at2759"/>
<dbReference type="Proteomes" id="UP000009136">
    <property type="component" value="Unplaced"/>
</dbReference>
<dbReference type="GO" id="GO:0036064">
    <property type="term" value="C:ciliary basal body"/>
    <property type="evidence" value="ECO:0000250"/>
    <property type="project" value="UniProtKB"/>
</dbReference>
<dbReference type="GO" id="GO:0031410">
    <property type="term" value="C:cytoplasmic vesicle"/>
    <property type="evidence" value="ECO:0007669"/>
    <property type="project" value="UniProtKB-KW"/>
</dbReference>
<dbReference type="GO" id="GO:0005802">
    <property type="term" value="C:trans-Golgi network"/>
    <property type="evidence" value="ECO:0000250"/>
    <property type="project" value="UniProtKB"/>
</dbReference>
<dbReference type="GO" id="GO:0008092">
    <property type="term" value="F:cytoskeletal protein binding"/>
    <property type="evidence" value="ECO:0000318"/>
    <property type="project" value="GO_Central"/>
</dbReference>
<dbReference type="GO" id="GO:0030030">
    <property type="term" value="P:cell projection organization"/>
    <property type="evidence" value="ECO:0007669"/>
    <property type="project" value="UniProtKB-KW"/>
</dbReference>
<dbReference type="GO" id="GO:0033674">
    <property type="term" value="P:positive regulation of kinase activity"/>
    <property type="evidence" value="ECO:0000250"/>
    <property type="project" value="UniProtKB"/>
</dbReference>
<dbReference type="GO" id="GO:0031344">
    <property type="term" value="P:regulation of cell projection organization"/>
    <property type="evidence" value="ECO:0000250"/>
    <property type="project" value="UniProtKB"/>
</dbReference>
<dbReference type="InterPro" id="IPR033602">
    <property type="entry name" value="CIMAP3"/>
</dbReference>
<dbReference type="InterPro" id="IPR010736">
    <property type="entry name" value="SHIPPO-rpt"/>
</dbReference>
<dbReference type="PANTHER" id="PTHR31508">
    <property type="entry name" value="PROTEIN PITCHFORK"/>
    <property type="match status" value="1"/>
</dbReference>
<dbReference type="PANTHER" id="PTHR31508:SF2">
    <property type="entry name" value="PROTEIN PITCHFORK"/>
    <property type="match status" value="1"/>
</dbReference>
<dbReference type="Pfam" id="PF07004">
    <property type="entry name" value="SHIPPO-rpt"/>
    <property type="match status" value="2"/>
</dbReference>
<proteinExistence type="evidence at transcript level"/>
<reference key="1">
    <citation type="submission" date="2005-11" db="EMBL/GenBank/DDBJ databases">
        <authorList>
            <consortium name="NIH - Mammalian Gene Collection (MGC) project"/>
        </authorList>
    </citation>
    <scope>NUCLEOTIDE SEQUENCE [LARGE SCALE MRNA]</scope>
    <source>
        <strain>Crossbred X Angus</strain>
        <tissue>Liver</tissue>
    </source>
</reference>
<gene>
    <name type="primary">CIMAP3</name>
    <name type="synonym">PIFO</name>
</gene>
<organism>
    <name type="scientific">Bos taurus</name>
    <name type="common">Bovine</name>
    <dbReference type="NCBI Taxonomy" id="9913"/>
    <lineage>
        <taxon>Eukaryota</taxon>
        <taxon>Metazoa</taxon>
        <taxon>Chordata</taxon>
        <taxon>Craniata</taxon>
        <taxon>Vertebrata</taxon>
        <taxon>Euteleostomi</taxon>
        <taxon>Mammalia</taxon>
        <taxon>Eutheria</taxon>
        <taxon>Laurasiatheria</taxon>
        <taxon>Artiodactyla</taxon>
        <taxon>Ruminantia</taxon>
        <taxon>Pecora</taxon>
        <taxon>Bovidae</taxon>
        <taxon>Bovinae</taxon>
        <taxon>Bos</taxon>
    </lineage>
</organism>
<keyword id="KW-0970">Cilium biogenesis/degradation</keyword>
<keyword id="KW-0963">Cytoplasm</keyword>
<keyword id="KW-0968">Cytoplasmic vesicle</keyword>
<keyword id="KW-0333">Golgi apparatus</keyword>
<keyword id="KW-1185">Reference proteome</keyword>
<accession>Q2TBS4</accession>
<comment type="function">
    <text evidence="1">During primary cilia disassembly, involved in cilia disassembly. Required specifically to control cilia retraction as well as the liberation and duplication of the basal body/centrosome. May act by stimulating AURKA activity at the basal body in a cell cycle-dependent manner (By similarity).</text>
</comment>
<comment type="subunit">
    <text evidence="1">Interacts with proteins involved in ciliary transport, including ARL13B, CETN1, KIF3A, RAB6A, RAB8A, TUBB1 and TUBG1. Interacts with AURKA (By similarity).</text>
</comment>
<comment type="subcellular location">
    <subcellularLocation>
        <location>Cytoplasmic vesicle</location>
    </subcellularLocation>
    <subcellularLocation>
        <location>Golgi apparatus</location>
        <location>trans-Golgi network</location>
    </subcellularLocation>
    <subcellularLocation>
        <location>Cytoplasm</location>
    </subcellularLocation>
    <text evidence="1">Accumulates specifically at the basal body and ciliary necklace during the early steps of cilia assembly and disassembly, when structural, functional and regulatory proteins are delivered to cilia. At S phase, accumulates in vesicles and declines during mitosis (By similarity).</text>
</comment>
<feature type="chain" id="PRO_0000284525" description="Ciliary microtubule-associated protein 3">
    <location>
        <begin position="1"/>
        <end position="192"/>
    </location>
</feature>
<protein>
    <recommendedName>
        <fullName>Ciliary microtubule-associated protein 3</fullName>
    </recommendedName>
    <alternativeName>
        <fullName>Protein pitchfork</fullName>
    </alternativeName>
</protein>
<name>CMAP3_BOVIN</name>
<evidence type="ECO:0000250" key="1">
    <source>
        <dbReference type="UniProtKB" id="Q9D9W1"/>
    </source>
</evidence>